<name>RL22_TROW8</name>
<organism>
    <name type="scientific">Tropheryma whipplei (strain TW08/27)</name>
    <name type="common">Whipple's bacillus</name>
    <dbReference type="NCBI Taxonomy" id="218496"/>
    <lineage>
        <taxon>Bacteria</taxon>
        <taxon>Bacillati</taxon>
        <taxon>Actinomycetota</taxon>
        <taxon>Actinomycetes</taxon>
        <taxon>Micrococcales</taxon>
        <taxon>Tropherymataceae</taxon>
        <taxon>Tropheryma</taxon>
    </lineage>
</organism>
<protein>
    <recommendedName>
        <fullName evidence="1">Large ribosomal subunit protein uL22</fullName>
    </recommendedName>
    <alternativeName>
        <fullName evidence="2">50S ribosomal protein L22</fullName>
    </alternativeName>
</protein>
<dbReference type="EMBL" id="BX251410">
    <property type="protein sequence ID" value="CAD66889.1"/>
    <property type="molecule type" value="Genomic_DNA"/>
</dbReference>
<dbReference type="RefSeq" id="WP_011096170.1">
    <property type="nucleotide sequence ID" value="NC_004551.1"/>
</dbReference>
<dbReference type="SMR" id="Q83I73"/>
<dbReference type="GeneID" id="67387988"/>
<dbReference type="KEGG" id="tws:TW212"/>
<dbReference type="HOGENOM" id="CLU_083987_3_3_11"/>
<dbReference type="GO" id="GO:0022625">
    <property type="term" value="C:cytosolic large ribosomal subunit"/>
    <property type="evidence" value="ECO:0007669"/>
    <property type="project" value="TreeGrafter"/>
</dbReference>
<dbReference type="GO" id="GO:0019843">
    <property type="term" value="F:rRNA binding"/>
    <property type="evidence" value="ECO:0007669"/>
    <property type="project" value="UniProtKB-UniRule"/>
</dbReference>
<dbReference type="GO" id="GO:0003735">
    <property type="term" value="F:structural constituent of ribosome"/>
    <property type="evidence" value="ECO:0007669"/>
    <property type="project" value="InterPro"/>
</dbReference>
<dbReference type="GO" id="GO:0006412">
    <property type="term" value="P:translation"/>
    <property type="evidence" value="ECO:0007669"/>
    <property type="project" value="UniProtKB-UniRule"/>
</dbReference>
<dbReference type="CDD" id="cd00336">
    <property type="entry name" value="Ribosomal_L22"/>
    <property type="match status" value="1"/>
</dbReference>
<dbReference type="Gene3D" id="3.90.470.10">
    <property type="entry name" value="Ribosomal protein L22/L17"/>
    <property type="match status" value="1"/>
</dbReference>
<dbReference type="HAMAP" id="MF_01331_B">
    <property type="entry name" value="Ribosomal_uL22_B"/>
    <property type="match status" value="1"/>
</dbReference>
<dbReference type="InterPro" id="IPR001063">
    <property type="entry name" value="Ribosomal_uL22"/>
</dbReference>
<dbReference type="InterPro" id="IPR005727">
    <property type="entry name" value="Ribosomal_uL22_bac/chlpt-type"/>
</dbReference>
<dbReference type="InterPro" id="IPR047867">
    <property type="entry name" value="Ribosomal_uL22_bac/org-type"/>
</dbReference>
<dbReference type="InterPro" id="IPR018260">
    <property type="entry name" value="Ribosomal_uL22_CS"/>
</dbReference>
<dbReference type="InterPro" id="IPR036394">
    <property type="entry name" value="Ribosomal_uL22_sf"/>
</dbReference>
<dbReference type="NCBIfam" id="TIGR01044">
    <property type="entry name" value="rplV_bact"/>
    <property type="match status" value="1"/>
</dbReference>
<dbReference type="PANTHER" id="PTHR13501">
    <property type="entry name" value="CHLOROPLAST 50S RIBOSOMAL PROTEIN L22-RELATED"/>
    <property type="match status" value="1"/>
</dbReference>
<dbReference type="PANTHER" id="PTHR13501:SF8">
    <property type="entry name" value="LARGE RIBOSOMAL SUBUNIT PROTEIN UL22M"/>
    <property type="match status" value="1"/>
</dbReference>
<dbReference type="Pfam" id="PF00237">
    <property type="entry name" value="Ribosomal_L22"/>
    <property type="match status" value="1"/>
</dbReference>
<dbReference type="SUPFAM" id="SSF54843">
    <property type="entry name" value="Ribosomal protein L22"/>
    <property type="match status" value="1"/>
</dbReference>
<dbReference type="PROSITE" id="PS00464">
    <property type="entry name" value="RIBOSOMAL_L22"/>
    <property type="match status" value="1"/>
</dbReference>
<evidence type="ECO:0000255" key="1">
    <source>
        <dbReference type="HAMAP-Rule" id="MF_01331"/>
    </source>
</evidence>
<evidence type="ECO:0000305" key="2"/>
<keyword id="KW-0687">Ribonucleoprotein</keyword>
<keyword id="KW-0689">Ribosomal protein</keyword>
<keyword id="KW-0694">RNA-binding</keyword>
<keyword id="KW-0699">rRNA-binding</keyword>
<reference key="1">
    <citation type="journal article" date="2003" name="Lancet">
        <title>Sequencing and analysis of the genome of the Whipple's disease bacterium Tropheryma whipplei.</title>
        <authorList>
            <person name="Bentley S.D."/>
            <person name="Maiwald M."/>
            <person name="Murphy L.D."/>
            <person name="Pallen M.J."/>
            <person name="Yeats C.A."/>
            <person name="Dover L.G."/>
            <person name="Norbertczak H.T."/>
            <person name="Besra G.S."/>
            <person name="Quail M.A."/>
            <person name="Harris D.E."/>
            <person name="von Herbay A."/>
            <person name="Goble A."/>
            <person name="Rutter S."/>
            <person name="Squares R."/>
            <person name="Squares S."/>
            <person name="Barrell B.G."/>
            <person name="Parkhill J."/>
            <person name="Relman D.A."/>
        </authorList>
    </citation>
    <scope>NUCLEOTIDE SEQUENCE [LARGE SCALE GENOMIC DNA]</scope>
    <source>
        <strain>TW08/27</strain>
    </source>
</reference>
<feature type="chain" id="PRO_0000125255" description="Large ribosomal subunit protein uL22">
    <location>
        <begin position="1"/>
        <end position="119"/>
    </location>
</feature>
<gene>
    <name evidence="1" type="primary">rplV</name>
    <name type="ordered locus">TW212</name>
</gene>
<accession>Q83I73</accession>
<sequence>MSEEKDTPLEAFASLKHSGVTPQKVRRIVDLIRGRSVDEALAILRFSPHSASGILYKLIVSAQANYANLLGRDDDLFVSSVYVDEGKTYKRGRPRARGSSSRILKRGSHVTVTLSKEVR</sequence>
<proteinExistence type="inferred from homology"/>
<comment type="function">
    <text evidence="1">This protein binds specifically to 23S rRNA; its binding is stimulated by other ribosomal proteins, e.g. L4, L17, and L20. It is important during the early stages of 50S assembly. It makes multiple contacts with different domains of the 23S rRNA in the assembled 50S subunit and ribosome (By similarity).</text>
</comment>
<comment type="function">
    <text evidence="1">The globular domain of the protein is located near the polypeptide exit tunnel on the outside of the subunit, while an extended beta-hairpin is found that lines the wall of the exit tunnel in the center of the 70S ribosome.</text>
</comment>
<comment type="subunit">
    <text evidence="1">Part of the 50S ribosomal subunit.</text>
</comment>
<comment type="similarity">
    <text evidence="1">Belongs to the universal ribosomal protein uL22 family.</text>
</comment>